<feature type="chain" id="PRO_1000116592" description="LexA repressor">
    <location>
        <begin position="1"/>
        <end position="239"/>
    </location>
</feature>
<feature type="DNA-binding region" description="H-T-H motif" evidence="1">
    <location>
        <begin position="26"/>
        <end position="46"/>
    </location>
</feature>
<feature type="active site" description="For autocatalytic cleavage activity" evidence="1">
    <location>
        <position position="159"/>
    </location>
</feature>
<feature type="active site" description="For autocatalytic cleavage activity" evidence="1">
    <location>
        <position position="197"/>
    </location>
</feature>
<feature type="site" description="Cleavage; by autolysis" evidence="1">
    <location>
        <begin position="124"/>
        <end position="125"/>
    </location>
</feature>
<protein>
    <recommendedName>
        <fullName evidence="1">LexA repressor</fullName>
        <ecNumber evidence="1">3.4.21.88</ecNumber>
    </recommendedName>
</protein>
<evidence type="ECO:0000255" key="1">
    <source>
        <dbReference type="HAMAP-Rule" id="MF_00015"/>
    </source>
</evidence>
<gene>
    <name evidence="1" type="primary">lexA</name>
    <name type="ordered locus">Avi_2561</name>
</gene>
<proteinExistence type="inferred from homology"/>
<comment type="function">
    <text evidence="1">Represses a number of genes involved in the response to DNA damage (SOS response), including recA and lexA. In the presence of single-stranded DNA, RecA interacts with LexA causing an autocatalytic cleavage which disrupts the DNA-binding part of LexA, leading to derepression of the SOS regulon and eventually DNA repair.</text>
</comment>
<comment type="catalytic activity">
    <reaction evidence="1">
        <text>Hydrolysis of Ala-|-Gly bond in repressor LexA.</text>
        <dbReference type="EC" id="3.4.21.88"/>
    </reaction>
</comment>
<comment type="subunit">
    <text evidence="1">Homodimer.</text>
</comment>
<comment type="similarity">
    <text evidence="1">Belongs to the peptidase S24 family.</text>
</comment>
<name>LEXA_ALLAM</name>
<organism>
    <name type="scientific">Allorhizobium ampelinum (strain ATCC BAA-846 / DSM 112012 / S4)</name>
    <name type="common">Agrobacterium vitis (strain S4)</name>
    <dbReference type="NCBI Taxonomy" id="311402"/>
    <lineage>
        <taxon>Bacteria</taxon>
        <taxon>Pseudomonadati</taxon>
        <taxon>Pseudomonadota</taxon>
        <taxon>Alphaproteobacteria</taxon>
        <taxon>Hyphomicrobiales</taxon>
        <taxon>Rhizobiaceae</taxon>
        <taxon>Rhizobium/Agrobacterium group</taxon>
        <taxon>Allorhizobium</taxon>
        <taxon>Allorhizobium ampelinum</taxon>
    </lineage>
</organism>
<reference key="1">
    <citation type="journal article" date="2009" name="J. Bacteriol.">
        <title>Genome sequences of three Agrobacterium biovars help elucidate the evolution of multichromosome genomes in bacteria.</title>
        <authorList>
            <person name="Slater S.C."/>
            <person name="Goldman B.S."/>
            <person name="Goodner B."/>
            <person name="Setubal J.C."/>
            <person name="Farrand S.K."/>
            <person name="Nester E.W."/>
            <person name="Burr T.J."/>
            <person name="Banta L."/>
            <person name="Dickerman A.W."/>
            <person name="Paulsen I."/>
            <person name="Otten L."/>
            <person name="Suen G."/>
            <person name="Welch R."/>
            <person name="Almeida N.F."/>
            <person name="Arnold F."/>
            <person name="Burton O.T."/>
            <person name="Du Z."/>
            <person name="Ewing A."/>
            <person name="Godsy E."/>
            <person name="Heisel S."/>
            <person name="Houmiel K.L."/>
            <person name="Jhaveri J."/>
            <person name="Lu J."/>
            <person name="Miller N.M."/>
            <person name="Norton S."/>
            <person name="Chen Q."/>
            <person name="Phoolcharoen W."/>
            <person name="Ohlin V."/>
            <person name="Ondrusek D."/>
            <person name="Pride N."/>
            <person name="Stricklin S.L."/>
            <person name="Sun J."/>
            <person name="Wheeler C."/>
            <person name="Wilson L."/>
            <person name="Zhu H."/>
            <person name="Wood D.W."/>
        </authorList>
    </citation>
    <scope>NUCLEOTIDE SEQUENCE [LARGE SCALE GENOMIC DNA]</scope>
    <source>
        <strain>ATCC BAA-846 / DSM 112012 / S4</strain>
    </source>
</reference>
<keyword id="KW-0068">Autocatalytic cleavage</keyword>
<keyword id="KW-0227">DNA damage</keyword>
<keyword id="KW-0234">DNA repair</keyword>
<keyword id="KW-0235">DNA replication</keyword>
<keyword id="KW-0238">DNA-binding</keyword>
<keyword id="KW-0378">Hydrolase</keyword>
<keyword id="KW-1185">Reference proteome</keyword>
<keyword id="KW-0678">Repressor</keyword>
<keyword id="KW-0742">SOS response</keyword>
<keyword id="KW-0804">Transcription</keyword>
<keyword id="KW-0805">Transcription regulation</keyword>
<sequence length="239" mass="26181">MLTRKQQELLLFIHERMKESGVPPSFDEMKDALDLASKSGIHRLITALEERGFIRRLPNRARALEVIKLPEAMTSSIPPRRTGFSPSVIEGSRGKLQAVPSAPAKQVEEVRNSSSIPVMGRIAAGVPISAIQNNTHDISVPMEMLGSGEHYALEVKGDSMIEAGILDGDTVIIRNATTANPGDIVVALVDDEEATLKRFRRRGASIALEAANPAYETRIFGPDRVKIQGKLVGLIRRYH</sequence>
<dbReference type="EC" id="3.4.21.88" evidence="1"/>
<dbReference type="EMBL" id="CP000633">
    <property type="protein sequence ID" value="ACM36837.1"/>
    <property type="molecule type" value="Genomic_DNA"/>
</dbReference>
<dbReference type="RefSeq" id="WP_015916258.1">
    <property type="nucleotide sequence ID" value="NC_011989.1"/>
</dbReference>
<dbReference type="SMR" id="B9JX59"/>
<dbReference type="STRING" id="311402.Avi_2561"/>
<dbReference type="MEROPS" id="S24.001"/>
<dbReference type="KEGG" id="avi:Avi_2561"/>
<dbReference type="eggNOG" id="COG1974">
    <property type="taxonomic scope" value="Bacteria"/>
</dbReference>
<dbReference type="HOGENOM" id="CLU_066192_45_2_5"/>
<dbReference type="Proteomes" id="UP000001596">
    <property type="component" value="Chromosome 1"/>
</dbReference>
<dbReference type="GO" id="GO:0003677">
    <property type="term" value="F:DNA binding"/>
    <property type="evidence" value="ECO:0007669"/>
    <property type="project" value="UniProtKB-UniRule"/>
</dbReference>
<dbReference type="GO" id="GO:0004252">
    <property type="term" value="F:serine-type endopeptidase activity"/>
    <property type="evidence" value="ECO:0007669"/>
    <property type="project" value="UniProtKB-UniRule"/>
</dbReference>
<dbReference type="GO" id="GO:0006281">
    <property type="term" value="P:DNA repair"/>
    <property type="evidence" value="ECO:0007669"/>
    <property type="project" value="UniProtKB-UniRule"/>
</dbReference>
<dbReference type="GO" id="GO:0006260">
    <property type="term" value="P:DNA replication"/>
    <property type="evidence" value="ECO:0007669"/>
    <property type="project" value="UniProtKB-UniRule"/>
</dbReference>
<dbReference type="GO" id="GO:0045892">
    <property type="term" value="P:negative regulation of DNA-templated transcription"/>
    <property type="evidence" value="ECO:0007669"/>
    <property type="project" value="UniProtKB-UniRule"/>
</dbReference>
<dbReference type="GO" id="GO:0006508">
    <property type="term" value="P:proteolysis"/>
    <property type="evidence" value="ECO:0007669"/>
    <property type="project" value="InterPro"/>
</dbReference>
<dbReference type="GO" id="GO:0009432">
    <property type="term" value="P:SOS response"/>
    <property type="evidence" value="ECO:0007669"/>
    <property type="project" value="UniProtKB-UniRule"/>
</dbReference>
<dbReference type="CDD" id="cd06529">
    <property type="entry name" value="S24_LexA-like"/>
    <property type="match status" value="1"/>
</dbReference>
<dbReference type="FunFam" id="1.10.10.10:FF:000102">
    <property type="entry name" value="LexA repressor"/>
    <property type="match status" value="1"/>
</dbReference>
<dbReference type="FunFam" id="2.10.109.10:FF:000001">
    <property type="entry name" value="LexA repressor"/>
    <property type="match status" value="1"/>
</dbReference>
<dbReference type="Gene3D" id="2.10.109.10">
    <property type="entry name" value="Umud Fragment, subunit A"/>
    <property type="match status" value="1"/>
</dbReference>
<dbReference type="Gene3D" id="1.10.10.10">
    <property type="entry name" value="Winged helix-like DNA-binding domain superfamily/Winged helix DNA-binding domain"/>
    <property type="match status" value="1"/>
</dbReference>
<dbReference type="HAMAP" id="MF_00015">
    <property type="entry name" value="LexA"/>
    <property type="match status" value="1"/>
</dbReference>
<dbReference type="InterPro" id="IPR006200">
    <property type="entry name" value="LexA"/>
</dbReference>
<dbReference type="InterPro" id="IPR039418">
    <property type="entry name" value="LexA-like"/>
</dbReference>
<dbReference type="InterPro" id="IPR036286">
    <property type="entry name" value="LexA/Signal_pep-like_sf"/>
</dbReference>
<dbReference type="InterPro" id="IPR006199">
    <property type="entry name" value="LexA_DNA-bd_dom"/>
</dbReference>
<dbReference type="InterPro" id="IPR050077">
    <property type="entry name" value="LexA_repressor"/>
</dbReference>
<dbReference type="InterPro" id="IPR006197">
    <property type="entry name" value="Peptidase_S24_LexA"/>
</dbReference>
<dbReference type="InterPro" id="IPR015927">
    <property type="entry name" value="Peptidase_S24_S26A/B/C"/>
</dbReference>
<dbReference type="InterPro" id="IPR036388">
    <property type="entry name" value="WH-like_DNA-bd_sf"/>
</dbReference>
<dbReference type="InterPro" id="IPR036390">
    <property type="entry name" value="WH_DNA-bd_sf"/>
</dbReference>
<dbReference type="NCBIfam" id="TIGR00498">
    <property type="entry name" value="lexA"/>
    <property type="match status" value="1"/>
</dbReference>
<dbReference type="PANTHER" id="PTHR33516">
    <property type="entry name" value="LEXA REPRESSOR"/>
    <property type="match status" value="1"/>
</dbReference>
<dbReference type="PANTHER" id="PTHR33516:SF2">
    <property type="entry name" value="LEXA REPRESSOR-RELATED"/>
    <property type="match status" value="1"/>
</dbReference>
<dbReference type="Pfam" id="PF01726">
    <property type="entry name" value="LexA_DNA_bind"/>
    <property type="match status" value="1"/>
</dbReference>
<dbReference type="Pfam" id="PF00717">
    <property type="entry name" value="Peptidase_S24"/>
    <property type="match status" value="1"/>
</dbReference>
<dbReference type="PRINTS" id="PR00726">
    <property type="entry name" value="LEXASERPTASE"/>
</dbReference>
<dbReference type="SUPFAM" id="SSF51306">
    <property type="entry name" value="LexA/Signal peptidase"/>
    <property type="match status" value="1"/>
</dbReference>
<dbReference type="SUPFAM" id="SSF46785">
    <property type="entry name" value="Winged helix' DNA-binding domain"/>
    <property type="match status" value="1"/>
</dbReference>
<accession>B9JX59</accession>